<proteinExistence type="evidence at protein level"/>
<feature type="chain" id="PRO_0000390392" description="Lipid II flippase MurJ">
    <location>
        <begin position="1"/>
        <end position="544"/>
    </location>
</feature>
<feature type="transmembrane region" description="Helical" evidence="1">
    <location>
        <begin position="21"/>
        <end position="41"/>
    </location>
</feature>
<feature type="transmembrane region" description="Helical" evidence="1">
    <location>
        <begin position="49"/>
        <end position="69"/>
    </location>
</feature>
<feature type="transmembrane region" description="Helical" evidence="1">
    <location>
        <begin position="90"/>
        <end position="110"/>
    </location>
</feature>
<feature type="transmembrane region" description="Helical" evidence="1">
    <location>
        <begin position="127"/>
        <end position="147"/>
    </location>
</feature>
<feature type="transmembrane region" description="Helical" evidence="1">
    <location>
        <begin position="169"/>
        <end position="189"/>
    </location>
</feature>
<feature type="transmembrane region" description="Helical" evidence="1">
    <location>
        <begin position="191"/>
        <end position="211"/>
    </location>
</feature>
<feature type="transmembrane region" description="Helical" evidence="1">
    <location>
        <begin position="241"/>
        <end position="261"/>
    </location>
</feature>
<feature type="transmembrane region" description="Helical" evidence="1">
    <location>
        <begin position="297"/>
        <end position="317"/>
    </location>
</feature>
<feature type="transmembrane region" description="Helical" evidence="1">
    <location>
        <begin position="338"/>
        <end position="358"/>
    </location>
</feature>
<feature type="transmembrane region" description="Helical" evidence="1">
    <location>
        <begin position="375"/>
        <end position="395"/>
    </location>
</feature>
<feature type="transmembrane region" description="Helical" evidence="1">
    <location>
        <begin position="404"/>
        <end position="424"/>
    </location>
</feature>
<feature type="transmembrane region" description="Helical" evidence="1">
    <location>
        <begin position="431"/>
        <end position="451"/>
    </location>
</feature>
<feature type="transmembrane region" description="Helical" evidence="1">
    <location>
        <begin position="471"/>
        <end position="491"/>
    </location>
</feature>
<feature type="transmembrane region" description="Helical" evidence="1">
    <location>
        <begin position="500"/>
        <end position="520"/>
    </location>
</feature>
<accession>O34674</accession>
<accession>Q795R9</accession>
<dbReference type="EMBL" id="AF008220">
    <property type="protein sequence ID" value="AAC00276.1"/>
    <property type="molecule type" value="Genomic_DNA"/>
</dbReference>
<dbReference type="EMBL" id="AL009126">
    <property type="protein sequence ID" value="CAB14983.1"/>
    <property type="molecule type" value="Genomic_DNA"/>
</dbReference>
<dbReference type="PIR" id="G69992">
    <property type="entry name" value="G69992"/>
</dbReference>
<dbReference type="RefSeq" id="NP_390883.1">
    <property type="nucleotide sequence ID" value="NC_000964.3"/>
</dbReference>
<dbReference type="RefSeq" id="WP_003229224.1">
    <property type="nucleotide sequence ID" value="NZ_OZ025638.1"/>
</dbReference>
<dbReference type="SMR" id="O34674"/>
<dbReference type="FunCoup" id="O34674">
    <property type="interactions" value="224"/>
</dbReference>
<dbReference type="STRING" id="224308.BSU30050"/>
<dbReference type="PaxDb" id="224308-BSU30050"/>
<dbReference type="DNASU" id="937937"/>
<dbReference type="EnsemblBacteria" id="CAB14983">
    <property type="protein sequence ID" value="CAB14983"/>
    <property type="gene ID" value="BSU_30050"/>
</dbReference>
<dbReference type="GeneID" id="937937"/>
<dbReference type="KEGG" id="bsu:BSU30050"/>
<dbReference type="PATRIC" id="fig|224308.179.peg.3262"/>
<dbReference type="eggNOG" id="COG2244">
    <property type="taxonomic scope" value="Bacteria"/>
</dbReference>
<dbReference type="InParanoid" id="O34674"/>
<dbReference type="OrthoDB" id="9775950at2"/>
<dbReference type="PhylomeDB" id="O34674"/>
<dbReference type="BioCyc" id="BSUB:BSU30050-MONOMER"/>
<dbReference type="UniPathway" id="UPA00219"/>
<dbReference type="Proteomes" id="UP000001570">
    <property type="component" value="Chromosome"/>
</dbReference>
<dbReference type="GO" id="GO:0005886">
    <property type="term" value="C:plasma membrane"/>
    <property type="evidence" value="ECO:0000318"/>
    <property type="project" value="GO_Central"/>
</dbReference>
<dbReference type="GO" id="GO:0051301">
    <property type="term" value="P:cell division"/>
    <property type="evidence" value="ECO:0007669"/>
    <property type="project" value="UniProtKB-KW"/>
</dbReference>
<dbReference type="GO" id="GO:0071555">
    <property type="term" value="P:cell wall organization"/>
    <property type="evidence" value="ECO:0007669"/>
    <property type="project" value="UniProtKB-KW"/>
</dbReference>
<dbReference type="GO" id="GO:0009252">
    <property type="term" value="P:peptidoglycan biosynthetic process"/>
    <property type="evidence" value="ECO:0007669"/>
    <property type="project" value="UniProtKB-UniPathway"/>
</dbReference>
<dbReference type="GO" id="GO:0008360">
    <property type="term" value="P:regulation of cell shape"/>
    <property type="evidence" value="ECO:0007669"/>
    <property type="project" value="UniProtKB-KW"/>
</dbReference>
<dbReference type="CDD" id="cd13124">
    <property type="entry name" value="MATE_SpoVB_like"/>
    <property type="match status" value="1"/>
</dbReference>
<dbReference type="InterPro" id="IPR024923">
    <property type="entry name" value="PG_synth_SpoVB"/>
</dbReference>
<dbReference type="InterPro" id="IPR050833">
    <property type="entry name" value="Poly_Biosynth_Transport"/>
</dbReference>
<dbReference type="InterPro" id="IPR002797">
    <property type="entry name" value="Polysacc_synth"/>
</dbReference>
<dbReference type="PANTHER" id="PTHR30250:SF21">
    <property type="entry name" value="LIPID II FLIPPASE MURJ"/>
    <property type="match status" value="1"/>
</dbReference>
<dbReference type="PANTHER" id="PTHR30250">
    <property type="entry name" value="PST FAMILY PREDICTED COLANIC ACID TRANSPORTER"/>
    <property type="match status" value="1"/>
</dbReference>
<dbReference type="Pfam" id="PF01943">
    <property type="entry name" value="Polysacc_synt"/>
    <property type="match status" value="1"/>
</dbReference>
<dbReference type="PIRSF" id="PIRSF038958">
    <property type="entry name" value="PG_synth_SpoVB"/>
    <property type="match status" value="1"/>
</dbReference>
<comment type="function">
    <text evidence="2 3 7">Involved in peptidoglycan biosynthesis. Transports lipid-linked peptidoglycan precursors from the inner to the outer leaflet of the cytoplasmic membrane (PubMed:25918422). Not essential for growth (PubMed:19648239, PubMed:19666716).</text>
</comment>
<comment type="pathway">
    <text evidence="4">Cell wall biogenesis; peptidoglycan biosynthesis.</text>
</comment>
<comment type="subcellular location">
    <subcellularLocation>
        <location evidence="6">Cell membrane</location>
        <topology evidence="1">Multi-pass membrane protein</topology>
    </subcellularLocation>
    <text evidence="3">Localizes at the septum.</text>
</comment>
<comment type="induction">
    <text evidence="2">Expressed at low levels during vegetative growth. Expression decreases significantly during sporulation.</text>
</comment>
<comment type="disruption phenotype">
    <text evidence="2 3 4">Cells lacking this gene are viable, have no defect in growth, but produce fewer spores, slightly longer cells and show an increase in cell chain formation. Also exhibits some resistance to moenomycin (PubMed:19648239, PubMed:19666716). Mutants lacking both murJ and amj have a lethal defect in cell wall synthesis (PubMed:25918422).</text>
</comment>
<comment type="similarity">
    <text evidence="6">Belongs to the polysaccharide synthase family.</text>
</comment>
<reference key="1">
    <citation type="journal article" date="1997" name="Microbiology">
        <title>Sequencing and functional annotation of the Bacillus subtilis genes in the 200 kb rrnB-dnaB region.</title>
        <authorList>
            <person name="Lapidus A."/>
            <person name="Galleron N."/>
            <person name="Sorokin A."/>
            <person name="Ehrlich S.D."/>
        </authorList>
    </citation>
    <scope>NUCLEOTIDE SEQUENCE [GENOMIC DNA]</scope>
    <source>
        <strain>168</strain>
    </source>
</reference>
<reference key="2">
    <citation type="journal article" date="1997" name="Nature">
        <title>The complete genome sequence of the Gram-positive bacterium Bacillus subtilis.</title>
        <authorList>
            <person name="Kunst F."/>
            <person name="Ogasawara N."/>
            <person name="Moszer I."/>
            <person name="Albertini A.M."/>
            <person name="Alloni G."/>
            <person name="Azevedo V."/>
            <person name="Bertero M.G."/>
            <person name="Bessieres P."/>
            <person name="Bolotin A."/>
            <person name="Borchert S."/>
            <person name="Borriss R."/>
            <person name="Boursier L."/>
            <person name="Brans A."/>
            <person name="Braun M."/>
            <person name="Brignell S.C."/>
            <person name="Bron S."/>
            <person name="Brouillet S."/>
            <person name="Bruschi C.V."/>
            <person name="Caldwell B."/>
            <person name="Capuano V."/>
            <person name="Carter N.M."/>
            <person name="Choi S.-K."/>
            <person name="Codani J.-J."/>
            <person name="Connerton I.F."/>
            <person name="Cummings N.J."/>
            <person name="Daniel R.A."/>
            <person name="Denizot F."/>
            <person name="Devine K.M."/>
            <person name="Duesterhoeft A."/>
            <person name="Ehrlich S.D."/>
            <person name="Emmerson P.T."/>
            <person name="Entian K.-D."/>
            <person name="Errington J."/>
            <person name="Fabret C."/>
            <person name="Ferrari E."/>
            <person name="Foulger D."/>
            <person name="Fritz C."/>
            <person name="Fujita M."/>
            <person name="Fujita Y."/>
            <person name="Fuma S."/>
            <person name="Galizzi A."/>
            <person name="Galleron N."/>
            <person name="Ghim S.-Y."/>
            <person name="Glaser P."/>
            <person name="Goffeau A."/>
            <person name="Golightly E.J."/>
            <person name="Grandi G."/>
            <person name="Guiseppi G."/>
            <person name="Guy B.J."/>
            <person name="Haga K."/>
            <person name="Haiech J."/>
            <person name="Harwood C.R."/>
            <person name="Henaut A."/>
            <person name="Hilbert H."/>
            <person name="Holsappel S."/>
            <person name="Hosono S."/>
            <person name="Hullo M.-F."/>
            <person name="Itaya M."/>
            <person name="Jones L.-M."/>
            <person name="Joris B."/>
            <person name="Karamata D."/>
            <person name="Kasahara Y."/>
            <person name="Klaerr-Blanchard M."/>
            <person name="Klein C."/>
            <person name="Kobayashi Y."/>
            <person name="Koetter P."/>
            <person name="Koningstein G."/>
            <person name="Krogh S."/>
            <person name="Kumano M."/>
            <person name="Kurita K."/>
            <person name="Lapidus A."/>
            <person name="Lardinois S."/>
            <person name="Lauber J."/>
            <person name="Lazarevic V."/>
            <person name="Lee S.-M."/>
            <person name="Levine A."/>
            <person name="Liu H."/>
            <person name="Masuda S."/>
            <person name="Mauel C."/>
            <person name="Medigue C."/>
            <person name="Medina N."/>
            <person name="Mellado R.P."/>
            <person name="Mizuno M."/>
            <person name="Moestl D."/>
            <person name="Nakai S."/>
            <person name="Noback M."/>
            <person name="Noone D."/>
            <person name="O'Reilly M."/>
            <person name="Ogawa K."/>
            <person name="Ogiwara A."/>
            <person name="Oudega B."/>
            <person name="Park S.-H."/>
            <person name="Parro V."/>
            <person name="Pohl T.M."/>
            <person name="Portetelle D."/>
            <person name="Porwollik S."/>
            <person name="Prescott A.M."/>
            <person name="Presecan E."/>
            <person name="Pujic P."/>
            <person name="Purnelle B."/>
            <person name="Rapoport G."/>
            <person name="Rey M."/>
            <person name="Reynolds S."/>
            <person name="Rieger M."/>
            <person name="Rivolta C."/>
            <person name="Rocha E."/>
            <person name="Roche B."/>
            <person name="Rose M."/>
            <person name="Sadaie Y."/>
            <person name="Sato T."/>
            <person name="Scanlan E."/>
            <person name="Schleich S."/>
            <person name="Schroeter R."/>
            <person name="Scoffone F."/>
            <person name="Sekiguchi J."/>
            <person name="Sekowska A."/>
            <person name="Seror S.J."/>
            <person name="Serror P."/>
            <person name="Shin B.-S."/>
            <person name="Soldo B."/>
            <person name="Sorokin A."/>
            <person name="Tacconi E."/>
            <person name="Takagi T."/>
            <person name="Takahashi H."/>
            <person name="Takemaru K."/>
            <person name="Takeuchi M."/>
            <person name="Tamakoshi A."/>
            <person name="Tanaka T."/>
            <person name="Terpstra P."/>
            <person name="Tognoni A."/>
            <person name="Tosato V."/>
            <person name="Uchiyama S."/>
            <person name="Vandenbol M."/>
            <person name="Vannier F."/>
            <person name="Vassarotti A."/>
            <person name="Viari A."/>
            <person name="Wambutt R."/>
            <person name="Wedler E."/>
            <person name="Wedler H."/>
            <person name="Weitzenegger T."/>
            <person name="Winters P."/>
            <person name="Wipat A."/>
            <person name="Yamamoto H."/>
            <person name="Yamane K."/>
            <person name="Yasumoto K."/>
            <person name="Yata K."/>
            <person name="Yoshida K."/>
            <person name="Yoshikawa H.-F."/>
            <person name="Zumstein E."/>
            <person name="Yoshikawa H."/>
            <person name="Danchin A."/>
        </authorList>
    </citation>
    <scope>NUCLEOTIDE SEQUENCE [LARGE SCALE GENOMIC DNA]</scope>
    <source>
        <strain>168</strain>
    </source>
</reference>
<reference key="3">
    <citation type="journal article" date="2009" name="J. Bacteriol.">
        <title>Homologues of the Bacillus subtilis SpoVB protein are involved in cell wall metabolism.</title>
        <authorList>
            <person name="Vasudevan P."/>
            <person name="McElligott J."/>
            <person name="Attkisson C."/>
            <person name="Betteken M."/>
            <person name="Popham D.L."/>
        </authorList>
    </citation>
    <scope>FUNCTION IN CELL DIVISION</scope>
    <scope>INDUCTION</scope>
    <scope>DISRUPTION PHENOTYPE</scope>
    <source>
        <strain>168</strain>
    </source>
</reference>
<reference key="4">
    <citation type="journal article" date="2009" name="J. Bacteriol.">
        <title>Bacillus subtilis homologs of MviN (MurJ), the putative Escherichia coli lipid II flippase, are not essential for growth.</title>
        <authorList>
            <person name="Fay A."/>
            <person name="Dworkin J."/>
        </authorList>
    </citation>
    <scope>FUNCTION</scope>
    <scope>SUBCELLULAR LOCATION</scope>
    <scope>DISRUPTION PHENOTYPE</scope>
    <source>
        <strain>168 / PY79</strain>
    </source>
</reference>
<reference key="5">
    <citation type="journal article" date="2015" name="Proc. Natl. Acad. Sci. U.S.A.">
        <title>MurJ and a novel lipid II flippase are required for cell wall biogenesis in Bacillus subtilis.</title>
        <authorList>
            <person name="Meeske A.J."/>
            <person name="Sham L.T."/>
            <person name="Kimsey H."/>
            <person name="Koo B.M."/>
            <person name="Gross C.A."/>
            <person name="Bernhardt T.G."/>
            <person name="Rudner D.Z."/>
        </authorList>
    </citation>
    <scope>FUNCTION</scope>
    <scope>PATHWAY</scope>
    <scope>DISRUPTION PHENOTYPE</scope>
</reference>
<keyword id="KW-0131">Cell cycle</keyword>
<keyword id="KW-0132">Cell division</keyword>
<keyword id="KW-1003">Cell membrane</keyword>
<keyword id="KW-0133">Cell shape</keyword>
<keyword id="KW-0961">Cell wall biogenesis/degradation</keyword>
<keyword id="KW-0472">Membrane</keyword>
<keyword id="KW-0573">Peptidoglycan synthesis</keyword>
<keyword id="KW-1185">Reference proteome</keyword>
<keyword id="KW-0812">Transmembrane</keyword>
<keyword id="KW-1133">Transmembrane helix</keyword>
<keyword id="KW-0813">Transport</keyword>
<organism>
    <name type="scientific">Bacillus subtilis (strain 168)</name>
    <dbReference type="NCBI Taxonomy" id="224308"/>
    <lineage>
        <taxon>Bacteria</taxon>
        <taxon>Bacillati</taxon>
        <taxon>Bacillota</taxon>
        <taxon>Bacilli</taxon>
        <taxon>Bacillales</taxon>
        <taxon>Bacillaceae</taxon>
        <taxon>Bacillus</taxon>
    </lineage>
</organism>
<sequence length="544" mass="59471">MSSKLLRGTFVLTLGTYISRILGMVYLIPFSIMVGATGGALFQYGYNQYTLFLNIATMGFPAAVSKFVSKYNSKGDYETSRKMLKAGMSVMLVTGMIAFFILYLSAPMFAEISLGGKDNNGLTIDHVVYVIRMVSLALLVVPIMSLVRGFFQGHQMMGPTAVSQVVEQIVRIIFLLSATFLILKVFNGGLVIAVGYATFAALIGAFGGLVVLYIYWNKRKGSLLAMMPNTGPTANLSYKKMFFELFSYAAPYVFVGLAIPLYNYIDTNTFNKAMIEAGHQAISQDMLAILTLYVQKLVMIPVSLATAFGLTLIPTITESFTSGNYKLLNQQINQTMQTILFLIIPAVVGISLLSGPTYTFFYGSESLHPELGANILLWYSPVAILFSLFTVNAAILQGINKQKFAVVSLVIGVVIKLVLNVPLIKLMQADGAILATALGYIASLLYGFIMIKRHAGYSYKILVKRTVLMLVLSAIMGIAVKIVQWVLGFFISYQDGQMQAAIVVVIAAAVGGAVYLYCGYRLGFLQKILGRRLPGFFRKGRHAG</sequence>
<protein>
    <recommendedName>
        <fullName evidence="6">Lipid II flippase MurJ</fullName>
    </recommendedName>
    <alternativeName>
        <fullName evidence="6">Cell division protein YtgP</fullName>
    </alternativeName>
</protein>
<gene>
    <name evidence="5" type="primary">murJ</name>
    <name type="synonym">ytgP</name>
    <name type="ordered locus">BSU30050</name>
</gene>
<name>MURJ_BACSU</name>
<evidence type="ECO:0000255" key="1"/>
<evidence type="ECO:0000269" key="2">
    <source>
    </source>
</evidence>
<evidence type="ECO:0000269" key="3">
    <source>
    </source>
</evidence>
<evidence type="ECO:0000269" key="4">
    <source>
    </source>
</evidence>
<evidence type="ECO:0000303" key="5">
    <source>
    </source>
</evidence>
<evidence type="ECO:0000305" key="6"/>
<evidence type="ECO:0000305" key="7">
    <source>
    </source>
</evidence>